<organism>
    <name type="scientific">Schizosaccharomyces pombe (strain 972 / ATCC 24843)</name>
    <name type="common">Fission yeast</name>
    <dbReference type="NCBI Taxonomy" id="284812"/>
    <lineage>
        <taxon>Eukaryota</taxon>
        <taxon>Fungi</taxon>
        <taxon>Dikarya</taxon>
        <taxon>Ascomycota</taxon>
        <taxon>Taphrinomycotina</taxon>
        <taxon>Schizosaccharomycetes</taxon>
        <taxon>Schizosaccharomycetales</taxon>
        <taxon>Schizosaccharomycetaceae</taxon>
        <taxon>Schizosaccharomyces</taxon>
    </lineage>
</organism>
<dbReference type="EC" id="2.1.1.-" evidence="1"/>
<dbReference type="EMBL" id="CU329670">
    <property type="protein sequence ID" value="CAB52732.1"/>
    <property type="molecule type" value="Genomic_DNA"/>
</dbReference>
<dbReference type="PIR" id="T38988">
    <property type="entry name" value="T38988"/>
</dbReference>
<dbReference type="BioGRID" id="279836">
    <property type="interactions" value="28"/>
</dbReference>
<dbReference type="FunCoup" id="Q9UUH2">
    <property type="interactions" value="87"/>
</dbReference>
<dbReference type="STRING" id="284812.Q9UUH2"/>
<dbReference type="PaxDb" id="4896-SPAC630.10.1"/>
<dbReference type="EnsemblFungi" id="SPAC630.10.1">
    <property type="protein sequence ID" value="SPAC630.10.1:pep"/>
    <property type="gene ID" value="SPAC630.10"/>
</dbReference>
<dbReference type="KEGG" id="spo:2543414"/>
<dbReference type="PomBase" id="SPAC630.10"/>
<dbReference type="VEuPathDB" id="FungiDB:SPAC630.10"/>
<dbReference type="eggNOG" id="ENOG502R82D">
    <property type="taxonomic scope" value="Eukaryota"/>
</dbReference>
<dbReference type="HOGENOM" id="CLU_041583_1_0_1"/>
<dbReference type="InParanoid" id="Q9UUH2"/>
<dbReference type="OMA" id="FHRTSKW"/>
<dbReference type="PhylomeDB" id="Q9UUH2"/>
<dbReference type="PRO" id="PR:Q9UUH2"/>
<dbReference type="Proteomes" id="UP000002485">
    <property type="component" value="Chromosome I"/>
</dbReference>
<dbReference type="GO" id="GO:0005730">
    <property type="term" value="C:nucleolus"/>
    <property type="evidence" value="ECO:0007005"/>
    <property type="project" value="PomBase"/>
</dbReference>
<dbReference type="GO" id="GO:0005634">
    <property type="term" value="C:nucleus"/>
    <property type="evidence" value="ECO:0007005"/>
    <property type="project" value="PomBase"/>
</dbReference>
<dbReference type="GO" id="GO:0016433">
    <property type="term" value="F:rRNA (adenine) methyltransferase activity"/>
    <property type="evidence" value="ECO:0000318"/>
    <property type="project" value="GO_Central"/>
</dbReference>
<dbReference type="GO" id="GO:0031167">
    <property type="term" value="P:rRNA methylation"/>
    <property type="evidence" value="ECO:0000305"/>
    <property type="project" value="PomBase"/>
</dbReference>
<dbReference type="HAMAP" id="MF_03044">
    <property type="entry name" value="BMT2"/>
    <property type="match status" value="1"/>
</dbReference>
<dbReference type="InterPro" id="IPR021867">
    <property type="entry name" value="Bmt2/SAMTOR"/>
</dbReference>
<dbReference type="PANTHER" id="PTHR21008:SF1">
    <property type="entry name" value="25S RRNA (ADENINE(2142)-N(1))-METHYLTRANSFERASE"/>
    <property type="match status" value="1"/>
</dbReference>
<dbReference type="PANTHER" id="PTHR21008">
    <property type="entry name" value="S-ADENOSYLMETHIONINE SENSOR UPSTREAM OF MTORC1-RELATED"/>
    <property type="match status" value="1"/>
</dbReference>
<dbReference type="Pfam" id="PF11968">
    <property type="entry name" value="Bmt2"/>
    <property type="match status" value="1"/>
</dbReference>
<evidence type="ECO:0000255" key="1">
    <source>
        <dbReference type="HAMAP-Rule" id="MF_03044"/>
    </source>
</evidence>
<evidence type="ECO:0000269" key="2">
    <source>
    </source>
</evidence>
<proteinExistence type="inferred from homology"/>
<reference key="1">
    <citation type="journal article" date="2002" name="Nature">
        <title>The genome sequence of Schizosaccharomyces pombe.</title>
        <authorList>
            <person name="Wood V."/>
            <person name="Gwilliam R."/>
            <person name="Rajandream M.A."/>
            <person name="Lyne M.H."/>
            <person name="Lyne R."/>
            <person name="Stewart A."/>
            <person name="Sgouros J.G."/>
            <person name="Peat N."/>
            <person name="Hayles J."/>
            <person name="Baker S.G."/>
            <person name="Basham D."/>
            <person name="Bowman S."/>
            <person name="Brooks K."/>
            <person name="Brown D."/>
            <person name="Brown S."/>
            <person name="Chillingworth T."/>
            <person name="Churcher C.M."/>
            <person name="Collins M."/>
            <person name="Connor R."/>
            <person name="Cronin A."/>
            <person name="Davis P."/>
            <person name="Feltwell T."/>
            <person name="Fraser A."/>
            <person name="Gentles S."/>
            <person name="Goble A."/>
            <person name="Hamlin N."/>
            <person name="Harris D.E."/>
            <person name="Hidalgo J."/>
            <person name="Hodgson G."/>
            <person name="Holroyd S."/>
            <person name="Hornsby T."/>
            <person name="Howarth S."/>
            <person name="Huckle E.J."/>
            <person name="Hunt S."/>
            <person name="Jagels K."/>
            <person name="James K.D."/>
            <person name="Jones L."/>
            <person name="Jones M."/>
            <person name="Leather S."/>
            <person name="McDonald S."/>
            <person name="McLean J."/>
            <person name="Mooney P."/>
            <person name="Moule S."/>
            <person name="Mungall K.L."/>
            <person name="Murphy L.D."/>
            <person name="Niblett D."/>
            <person name="Odell C."/>
            <person name="Oliver K."/>
            <person name="O'Neil S."/>
            <person name="Pearson D."/>
            <person name="Quail M.A."/>
            <person name="Rabbinowitsch E."/>
            <person name="Rutherford K.M."/>
            <person name="Rutter S."/>
            <person name="Saunders D."/>
            <person name="Seeger K."/>
            <person name="Sharp S."/>
            <person name="Skelton J."/>
            <person name="Simmonds M.N."/>
            <person name="Squares R."/>
            <person name="Squares S."/>
            <person name="Stevens K."/>
            <person name="Taylor K."/>
            <person name="Taylor R.G."/>
            <person name="Tivey A."/>
            <person name="Walsh S.V."/>
            <person name="Warren T."/>
            <person name="Whitehead S."/>
            <person name="Woodward J.R."/>
            <person name="Volckaert G."/>
            <person name="Aert R."/>
            <person name="Robben J."/>
            <person name="Grymonprez B."/>
            <person name="Weltjens I."/>
            <person name="Vanstreels E."/>
            <person name="Rieger M."/>
            <person name="Schaefer M."/>
            <person name="Mueller-Auer S."/>
            <person name="Gabel C."/>
            <person name="Fuchs M."/>
            <person name="Duesterhoeft A."/>
            <person name="Fritzc C."/>
            <person name="Holzer E."/>
            <person name="Moestl D."/>
            <person name="Hilbert H."/>
            <person name="Borzym K."/>
            <person name="Langer I."/>
            <person name="Beck A."/>
            <person name="Lehrach H."/>
            <person name="Reinhardt R."/>
            <person name="Pohl T.M."/>
            <person name="Eger P."/>
            <person name="Zimmermann W."/>
            <person name="Wedler H."/>
            <person name="Wambutt R."/>
            <person name="Purnelle B."/>
            <person name="Goffeau A."/>
            <person name="Cadieu E."/>
            <person name="Dreano S."/>
            <person name="Gloux S."/>
            <person name="Lelaure V."/>
            <person name="Mottier S."/>
            <person name="Galibert F."/>
            <person name="Aves S.J."/>
            <person name="Xiang Z."/>
            <person name="Hunt C."/>
            <person name="Moore K."/>
            <person name="Hurst S.M."/>
            <person name="Lucas M."/>
            <person name="Rochet M."/>
            <person name="Gaillardin C."/>
            <person name="Tallada V.A."/>
            <person name="Garzon A."/>
            <person name="Thode G."/>
            <person name="Daga R.R."/>
            <person name="Cruzado L."/>
            <person name="Jimenez J."/>
            <person name="Sanchez M."/>
            <person name="del Rey F."/>
            <person name="Benito J."/>
            <person name="Dominguez A."/>
            <person name="Revuelta J.L."/>
            <person name="Moreno S."/>
            <person name="Armstrong J."/>
            <person name="Forsburg S.L."/>
            <person name="Cerutti L."/>
            <person name="Lowe T."/>
            <person name="McCombie W.R."/>
            <person name="Paulsen I."/>
            <person name="Potashkin J."/>
            <person name="Shpakovski G.V."/>
            <person name="Ussery D."/>
            <person name="Barrell B.G."/>
            <person name="Nurse P."/>
        </authorList>
    </citation>
    <scope>NUCLEOTIDE SEQUENCE [LARGE SCALE GENOMIC DNA]</scope>
    <source>
        <strain>972 / ATCC 24843</strain>
    </source>
</reference>
<reference key="2">
    <citation type="journal article" date="2006" name="Nat. Biotechnol.">
        <title>ORFeome cloning and global analysis of protein localization in the fission yeast Schizosaccharomyces pombe.</title>
        <authorList>
            <person name="Matsuyama A."/>
            <person name="Arai R."/>
            <person name="Yashiroda Y."/>
            <person name="Shirai A."/>
            <person name="Kamata A."/>
            <person name="Sekido S."/>
            <person name="Kobayashi Y."/>
            <person name="Hashimoto A."/>
            <person name="Hamamoto M."/>
            <person name="Hiraoka Y."/>
            <person name="Horinouchi S."/>
            <person name="Yoshida M."/>
        </authorList>
    </citation>
    <scope>SUBCELLULAR LOCATION [LARGE SCALE ANALYSIS]</scope>
</reference>
<gene>
    <name type="ORF">SPAC630.10</name>
</gene>
<name>BMT2_SCHPO</name>
<protein>
    <recommendedName>
        <fullName evidence="1">25S rRNA adenine-N(1) methyltransferase</fullName>
        <ecNumber evidence="1">2.1.1.-</ecNumber>
    </recommendedName>
</protein>
<accession>Q9UUH2</accession>
<keyword id="KW-0489">Methyltransferase</keyword>
<keyword id="KW-0539">Nucleus</keyword>
<keyword id="KW-1185">Reference proteome</keyword>
<keyword id="KW-0949">S-adenosyl-L-methionine</keyword>
<keyword id="KW-0808">Transferase</keyword>
<feature type="chain" id="PRO_0000351423" description="25S rRNA adenine-N(1) methyltransferase">
    <location>
        <begin position="1"/>
        <end position="270"/>
    </location>
</feature>
<feature type="binding site" evidence="1">
    <location>
        <position position="111"/>
    </location>
    <ligand>
        <name>S-adenosyl-L-methionine</name>
        <dbReference type="ChEBI" id="CHEBI:59789"/>
    </ligand>
</feature>
<feature type="binding site" evidence="1">
    <location>
        <position position="131"/>
    </location>
    <ligand>
        <name>S-adenosyl-L-methionine</name>
        <dbReference type="ChEBI" id="CHEBI:59789"/>
    </ligand>
</feature>
<comment type="function">
    <text evidence="1">S-adenosyl-L-methionine-dependent methyltransferase that specifically methylates the N(1) position of an adenine present in helix 65 in 25S rRNA.</text>
</comment>
<comment type="subcellular location">
    <subcellularLocation>
        <location evidence="1 2">Nucleus</location>
        <location evidence="1 2">Nucleolus</location>
    </subcellularLocation>
</comment>
<comment type="similarity">
    <text evidence="1">Belongs to the BMT2 family.</text>
</comment>
<sequence length="270" mass="30760">MRPIPVKNRIGKNNIDNAKGLKGNKLIRHYHNLLKEKSRLIASSAPIEKIKNVESELENIGIDAYQRASRSGQAEGKGGDSSKILIKWIRTTPCFSYCARLKEPKDLLEIGSVSVDNKCSTCGLFRVSRIDLHSVHPLIKQQDFLERTPEEGLFTGISCSLVLNFAPPELRAKMLLHCTGLLMPPNKEQPPWLFLVLPSPCITNSRYMDEKTLHSIMIQFGFICRQKSISKKIAYYLYSYECFPMKEIDWKKKIVNDGATRNNFFIPCIL</sequence>